<comment type="function">
    <text evidence="2 3">Part of the multisubunit axonemal ATPase complexes that generate the force for cilia motility and govern beat frequency (By similarity). Component of the outer arm dynein (ODA). May be involved in a mechanosensory feedback mechanism controlling ODA activity based on external conformational cues by tethering the outer arm dynein heavy chain (DNAH5) to the microtubule within the axoneme (By similarity). Important for ciliary function in the airways and for the function of the cilia that produce the nodal flow essential for the determination of the left-right asymmetry (By similarity).</text>
</comment>
<comment type="subunit">
    <text evidence="2">Interacts with ZMYND10 (via C-terminus). Interacts with DNAH5, a outer arm dynein heavy chain. Interacts with tubulin located within the A-tubule of the outer doublets in a ATP-independent manner.</text>
</comment>
<comment type="subcellular location">
    <subcellularLocation>
        <location evidence="2">Cytoplasm</location>
        <location evidence="2">Cytoskeleton</location>
        <location evidence="2">Cilium axoneme</location>
    </subcellularLocation>
</comment>
<comment type="miscellaneous">
    <text evidence="3">Outer (ODAs) and inner (IDAs) dynein arms contain the molecular motors that generate the force to move cilia by ATP-dependent reactions. There are two mechanosensory systems that monitor and respond to the mechanical state (curvature) of the axoneme. One system involves the central pair microtubule complex and radial spokes and the second system involves the outer dynein arms.</text>
</comment>
<comment type="similarity">
    <text evidence="4">Belongs to the dynein light chain LC1-type family.</text>
</comment>
<organism>
    <name type="scientific">Bos taurus</name>
    <name type="common">Bovine</name>
    <dbReference type="NCBI Taxonomy" id="9913"/>
    <lineage>
        <taxon>Eukaryota</taxon>
        <taxon>Metazoa</taxon>
        <taxon>Chordata</taxon>
        <taxon>Craniata</taxon>
        <taxon>Vertebrata</taxon>
        <taxon>Euteleostomi</taxon>
        <taxon>Mammalia</taxon>
        <taxon>Eutheria</taxon>
        <taxon>Laurasiatheria</taxon>
        <taxon>Artiodactyla</taxon>
        <taxon>Ruminantia</taxon>
        <taxon>Pecora</taxon>
        <taxon>Bovidae</taxon>
        <taxon>Bovinae</taxon>
        <taxon>Bos</taxon>
    </lineage>
</organism>
<proteinExistence type="evidence at transcript level"/>
<name>DNAL1_BOVIN</name>
<dbReference type="EMBL" id="BC112679">
    <property type="protein sequence ID" value="AAI12680.1"/>
    <property type="molecule type" value="mRNA"/>
</dbReference>
<dbReference type="RefSeq" id="NP_001039892.1">
    <property type="nucleotide sequence ID" value="NM_001046427.2"/>
</dbReference>
<dbReference type="RefSeq" id="XP_015328729.1">
    <property type="nucleotide sequence ID" value="XM_015473243.1"/>
</dbReference>
<dbReference type="RefSeq" id="XP_059746543.1">
    <property type="nucleotide sequence ID" value="XM_059890560.1"/>
</dbReference>
<dbReference type="SMR" id="Q2KID4"/>
<dbReference type="FunCoup" id="Q2KID4">
    <property type="interactions" value="1634"/>
</dbReference>
<dbReference type="STRING" id="9913.ENSBTAP00000072320"/>
<dbReference type="PaxDb" id="9913-ENSBTAP00000021183"/>
<dbReference type="Ensembl" id="ENSBTAT00000021183.4">
    <property type="protein sequence ID" value="ENSBTAP00000021183.3"/>
    <property type="gene ID" value="ENSBTAG00000015930.5"/>
</dbReference>
<dbReference type="Ensembl" id="ENSBTAT00000089753.1">
    <property type="protein sequence ID" value="ENSBTAP00000082149.1"/>
    <property type="gene ID" value="ENSBTAG00000015930.5"/>
</dbReference>
<dbReference type="GeneID" id="538164"/>
<dbReference type="KEGG" id="bta:538164"/>
<dbReference type="CTD" id="83544"/>
<dbReference type="VEuPathDB" id="HostDB:ENSBTAG00000015930"/>
<dbReference type="VGNC" id="VGNC:55111">
    <property type="gene designation" value="DNAL1"/>
</dbReference>
<dbReference type="eggNOG" id="KOG0531">
    <property type="taxonomic scope" value="Eukaryota"/>
</dbReference>
<dbReference type="GeneTree" id="ENSGT00390000016904"/>
<dbReference type="HOGENOM" id="CLU_092189_0_0_1"/>
<dbReference type="InParanoid" id="Q2KID4"/>
<dbReference type="OrthoDB" id="266138at2759"/>
<dbReference type="TreeFam" id="TF323974"/>
<dbReference type="Proteomes" id="UP000009136">
    <property type="component" value="Chromosome 10"/>
</dbReference>
<dbReference type="Bgee" id="ENSBTAG00000015930">
    <property type="expression patterns" value="Expressed in cortex of kidney and 111 other cell types or tissues"/>
</dbReference>
<dbReference type="GO" id="GO:0042995">
    <property type="term" value="C:cell projection"/>
    <property type="evidence" value="ECO:0007669"/>
    <property type="project" value="UniProtKB-KW"/>
</dbReference>
<dbReference type="GO" id="GO:0005737">
    <property type="term" value="C:cytoplasm"/>
    <property type="evidence" value="ECO:0000318"/>
    <property type="project" value="GO_Central"/>
</dbReference>
<dbReference type="GO" id="GO:0030286">
    <property type="term" value="C:dynein complex"/>
    <property type="evidence" value="ECO:0007669"/>
    <property type="project" value="UniProtKB-KW"/>
</dbReference>
<dbReference type="GO" id="GO:0005874">
    <property type="term" value="C:microtubule"/>
    <property type="evidence" value="ECO:0007669"/>
    <property type="project" value="UniProtKB-KW"/>
</dbReference>
<dbReference type="GO" id="GO:0043014">
    <property type="term" value="F:alpha-tubulin binding"/>
    <property type="evidence" value="ECO:0000318"/>
    <property type="project" value="GO_Central"/>
</dbReference>
<dbReference type="GO" id="GO:0045504">
    <property type="term" value="F:dynein heavy chain binding"/>
    <property type="evidence" value="ECO:0000318"/>
    <property type="project" value="GO_Central"/>
</dbReference>
<dbReference type="GO" id="GO:0036158">
    <property type="term" value="P:outer dynein arm assembly"/>
    <property type="evidence" value="ECO:0000318"/>
    <property type="project" value="GO_Central"/>
</dbReference>
<dbReference type="FunFam" id="3.80.10.10:FF:000049">
    <property type="entry name" value="Dynein light chain 1"/>
    <property type="match status" value="1"/>
</dbReference>
<dbReference type="Gene3D" id="3.80.10.10">
    <property type="entry name" value="Ribonuclease Inhibitor"/>
    <property type="match status" value="1"/>
</dbReference>
<dbReference type="InterPro" id="IPR001611">
    <property type="entry name" value="Leu-rich_rpt"/>
</dbReference>
<dbReference type="InterPro" id="IPR025875">
    <property type="entry name" value="Leu-rich_rpt_4"/>
</dbReference>
<dbReference type="InterPro" id="IPR032675">
    <property type="entry name" value="LRR_dom_sf"/>
</dbReference>
<dbReference type="PANTHER" id="PTHR15454:SF33">
    <property type="entry name" value="DYNEIN AXONEMAL LIGHT CHAIN 1"/>
    <property type="match status" value="1"/>
</dbReference>
<dbReference type="PANTHER" id="PTHR15454">
    <property type="entry name" value="NISCHARIN RELATED"/>
    <property type="match status" value="1"/>
</dbReference>
<dbReference type="Pfam" id="PF12799">
    <property type="entry name" value="LRR_4"/>
    <property type="match status" value="1"/>
</dbReference>
<dbReference type="SMART" id="SM00365">
    <property type="entry name" value="LRR_SD22"/>
    <property type="match status" value="4"/>
</dbReference>
<dbReference type="SUPFAM" id="SSF52058">
    <property type="entry name" value="L domain-like"/>
    <property type="match status" value="1"/>
</dbReference>
<dbReference type="PROSITE" id="PS51450">
    <property type="entry name" value="LRR"/>
    <property type="match status" value="4"/>
</dbReference>
<evidence type="ECO:0000250" key="1">
    <source>
        <dbReference type="UniProtKB" id="Q05A62"/>
    </source>
</evidence>
<evidence type="ECO:0000250" key="2">
    <source>
        <dbReference type="UniProtKB" id="Q4LDG9"/>
    </source>
</evidence>
<evidence type="ECO:0000250" key="3">
    <source>
        <dbReference type="UniProtKB" id="Q9XHH2"/>
    </source>
</evidence>
<evidence type="ECO:0000305" key="4"/>
<sequence>MAKATTIKEALARWEEKTSQKPSEAREIKLYAQIPPIEKMDASLSTLSNCEKLSLSTNCIEKIANLNGLKNLRILSLGRNNIKNLNGLEAVGDTLEELWISYNFIEKLKGIHVMKKLKILYMSNNLVKDWAEFVKLAELPCLEDLVFVGNPLEEKHSAEGNWVEEATKRVPKLKKLDGTPVIKEDEEEDN</sequence>
<gene>
    <name type="primary">DNAL1</name>
</gene>
<feature type="initiator methionine" description="Removed" evidence="2">
    <location>
        <position position="1"/>
    </location>
</feature>
<feature type="chain" id="PRO_0000281129" description="Dynein axonemal light chain 1">
    <location>
        <begin position="2"/>
        <end position="190"/>
    </location>
</feature>
<feature type="repeat" description="LRR 1">
    <location>
        <begin position="49"/>
        <end position="70"/>
    </location>
</feature>
<feature type="repeat" description="LRR 2">
    <location>
        <begin position="71"/>
        <end position="92"/>
    </location>
</feature>
<feature type="repeat" description="LRR 3">
    <location>
        <begin position="94"/>
        <end position="115"/>
    </location>
</feature>
<feature type="repeat" description="LRR 4">
    <location>
        <begin position="116"/>
        <end position="137"/>
    </location>
</feature>
<feature type="domain" description="LRRCT">
    <location>
        <begin position="150"/>
        <end position="190"/>
    </location>
</feature>
<feature type="modified residue" description="N-acetylalanine" evidence="2">
    <location>
        <position position="2"/>
    </location>
</feature>
<feature type="modified residue" description="Phosphoserine" evidence="1">
    <location>
        <position position="56"/>
    </location>
</feature>
<accession>Q2KID4</accession>
<protein>
    <recommendedName>
        <fullName>Dynein axonemal light chain 1</fullName>
    </recommendedName>
</protein>
<keyword id="KW-0007">Acetylation</keyword>
<keyword id="KW-0966">Cell projection</keyword>
<keyword id="KW-0963">Cytoplasm</keyword>
<keyword id="KW-0206">Cytoskeleton</keyword>
<keyword id="KW-0243">Dynein</keyword>
<keyword id="KW-0433">Leucine-rich repeat</keyword>
<keyword id="KW-0493">Microtubule</keyword>
<keyword id="KW-0505">Motor protein</keyword>
<keyword id="KW-0597">Phosphoprotein</keyword>
<keyword id="KW-1185">Reference proteome</keyword>
<keyword id="KW-0677">Repeat</keyword>
<reference key="1">
    <citation type="submission" date="2006-01" db="EMBL/GenBank/DDBJ databases">
        <authorList>
            <consortium name="NIH - Mammalian Gene Collection (MGC) project"/>
        </authorList>
    </citation>
    <scope>NUCLEOTIDE SEQUENCE [LARGE SCALE MRNA]</scope>
    <source>
        <strain>Hereford</strain>
        <tissue>Hypothalamus</tissue>
    </source>
</reference>